<accession>Q3BAM3</accession>
<gene>
    <name evidence="1" type="primary">psbE</name>
</gene>
<dbReference type="EMBL" id="AY916449">
    <property type="protein sequence ID" value="AAW82517.1"/>
    <property type="molecule type" value="Genomic_DNA"/>
</dbReference>
<dbReference type="RefSeq" id="YP_358595.1">
    <property type="nucleotide sequence ID" value="NC_007499.1"/>
</dbReference>
<dbReference type="SMR" id="Q3BAM3"/>
<dbReference type="GeneID" id="3741696"/>
<dbReference type="GO" id="GO:0009535">
    <property type="term" value="C:chloroplast thylakoid membrane"/>
    <property type="evidence" value="ECO:0007669"/>
    <property type="project" value="UniProtKB-SubCell"/>
</dbReference>
<dbReference type="GO" id="GO:0009539">
    <property type="term" value="C:photosystem II reaction center"/>
    <property type="evidence" value="ECO:0007669"/>
    <property type="project" value="InterPro"/>
</dbReference>
<dbReference type="GO" id="GO:0009055">
    <property type="term" value="F:electron transfer activity"/>
    <property type="evidence" value="ECO:0007669"/>
    <property type="project" value="UniProtKB-UniRule"/>
</dbReference>
<dbReference type="GO" id="GO:0020037">
    <property type="term" value="F:heme binding"/>
    <property type="evidence" value="ECO:0007669"/>
    <property type="project" value="InterPro"/>
</dbReference>
<dbReference type="GO" id="GO:0005506">
    <property type="term" value="F:iron ion binding"/>
    <property type="evidence" value="ECO:0007669"/>
    <property type="project" value="UniProtKB-UniRule"/>
</dbReference>
<dbReference type="GO" id="GO:0009767">
    <property type="term" value="P:photosynthetic electron transport chain"/>
    <property type="evidence" value="ECO:0007669"/>
    <property type="project" value="InterPro"/>
</dbReference>
<dbReference type="Gene3D" id="1.20.5.860">
    <property type="entry name" value="Photosystem II cytochrome b559, alpha subunit"/>
    <property type="match status" value="1"/>
</dbReference>
<dbReference type="HAMAP" id="MF_00642">
    <property type="entry name" value="PSII_PsbE"/>
    <property type="match status" value="1"/>
</dbReference>
<dbReference type="InterPro" id="IPR006217">
    <property type="entry name" value="PSII_cyt_b559_asu"/>
</dbReference>
<dbReference type="InterPro" id="IPR037025">
    <property type="entry name" value="PSII_cyt_b559_asu_sf"/>
</dbReference>
<dbReference type="InterPro" id="IPR006216">
    <property type="entry name" value="PSII_cyt_b559_CS"/>
</dbReference>
<dbReference type="InterPro" id="IPR013081">
    <property type="entry name" value="PSII_cyt_b559_N"/>
</dbReference>
<dbReference type="InterPro" id="IPR013082">
    <property type="entry name" value="PSII_cytb559_asu_lum"/>
</dbReference>
<dbReference type="NCBIfam" id="TIGR01332">
    <property type="entry name" value="cyt_b559_alpha"/>
    <property type="match status" value="1"/>
</dbReference>
<dbReference type="PANTHER" id="PTHR33391">
    <property type="entry name" value="CYTOCHROME B559 SUBUNIT BETA-RELATED"/>
    <property type="match status" value="1"/>
</dbReference>
<dbReference type="PANTHER" id="PTHR33391:SF9">
    <property type="entry name" value="CYTOCHROME B559 SUBUNIT BETA-RELATED"/>
    <property type="match status" value="1"/>
</dbReference>
<dbReference type="Pfam" id="PF00283">
    <property type="entry name" value="Cytochrom_B559"/>
    <property type="match status" value="1"/>
</dbReference>
<dbReference type="Pfam" id="PF00284">
    <property type="entry name" value="Cytochrom_B559a"/>
    <property type="match status" value="1"/>
</dbReference>
<dbReference type="PIRSF" id="PIRSF000036">
    <property type="entry name" value="PsbE"/>
    <property type="match status" value="1"/>
</dbReference>
<dbReference type="SUPFAM" id="SSF161045">
    <property type="entry name" value="Cytochrome b559 subunits"/>
    <property type="match status" value="1"/>
</dbReference>
<dbReference type="PROSITE" id="PS00537">
    <property type="entry name" value="CYTOCHROME_B559"/>
    <property type="match status" value="1"/>
</dbReference>
<reference key="1">
    <citation type="journal article" date="2006" name="Mol. Biol. Evol.">
        <title>The chloroplast genome of Phalaenopsis aphrodite (Orchidaceae): comparative analysis of evolutionary rate with that of grasses and its phylogenetic implications.</title>
        <authorList>
            <person name="Chang C.-C."/>
            <person name="Lin H.-C."/>
            <person name="Lin I.-P."/>
            <person name="Chow T.-Y."/>
            <person name="Chen H.-H."/>
            <person name="Chen W.-H."/>
            <person name="Cheng C.-H."/>
            <person name="Lin C.-Y."/>
            <person name="Liu S.-M."/>
            <person name="Chang C.-C."/>
            <person name="Chaw S.-M."/>
        </authorList>
    </citation>
    <scope>NUCLEOTIDE SEQUENCE [LARGE SCALE GENOMIC DNA]</scope>
    <source>
        <strain>cv. Taisugar TS-97</strain>
    </source>
</reference>
<evidence type="ECO:0000255" key="1">
    <source>
        <dbReference type="HAMAP-Rule" id="MF_00642"/>
    </source>
</evidence>
<sequence>MSGSTGERSFADIITSIRYWVIHSITIPSLFIAGWLFVSTGLAYDVFGSPRPNEYFTESRQGIPLITGRFDSLEQLDKFSNPF</sequence>
<keyword id="KW-0150">Chloroplast</keyword>
<keyword id="KW-0249">Electron transport</keyword>
<keyword id="KW-0349">Heme</keyword>
<keyword id="KW-0408">Iron</keyword>
<keyword id="KW-0472">Membrane</keyword>
<keyword id="KW-0479">Metal-binding</keyword>
<keyword id="KW-0602">Photosynthesis</keyword>
<keyword id="KW-0604">Photosystem II</keyword>
<keyword id="KW-0934">Plastid</keyword>
<keyword id="KW-0793">Thylakoid</keyword>
<keyword id="KW-0812">Transmembrane</keyword>
<keyword id="KW-1133">Transmembrane helix</keyword>
<keyword id="KW-0813">Transport</keyword>
<feature type="chain" id="PRO_0000233207" description="Cytochrome b559 subunit alpha">
    <location>
        <begin position="1"/>
        <end position="83"/>
    </location>
</feature>
<feature type="transmembrane region" description="Helical" evidence="1">
    <location>
        <begin position="21"/>
        <end position="35"/>
    </location>
</feature>
<feature type="binding site" description="axial binding residue" evidence="1">
    <location>
        <position position="23"/>
    </location>
    <ligand>
        <name>heme</name>
        <dbReference type="ChEBI" id="CHEBI:30413"/>
        <note>ligand shared with beta subunit</note>
    </ligand>
    <ligandPart>
        <name>Fe</name>
        <dbReference type="ChEBI" id="CHEBI:18248"/>
    </ligandPart>
</feature>
<protein>
    <recommendedName>
        <fullName evidence="1">Cytochrome b559 subunit alpha</fullName>
    </recommendedName>
    <alternativeName>
        <fullName evidence="1">PSII reaction center subunit V</fullName>
    </alternativeName>
</protein>
<proteinExistence type="inferred from homology"/>
<organism>
    <name type="scientific">Phalaenopsis aphrodite subsp. formosana</name>
    <name type="common">Moth orchid</name>
    <dbReference type="NCBI Taxonomy" id="308872"/>
    <lineage>
        <taxon>Eukaryota</taxon>
        <taxon>Viridiplantae</taxon>
        <taxon>Streptophyta</taxon>
        <taxon>Embryophyta</taxon>
        <taxon>Tracheophyta</taxon>
        <taxon>Spermatophyta</taxon>
        <taxon>Magnoliopsida</taxon>
        <taxon>Liliopsida</taxon>
        <taxon>Asparagales</taxon>
        <taxon>Orchidaceae</taxon>
        <taxon>Epidendroideae</taxon>
        <taxon>Vandeae</taxon>
        <taxon>Aeridinae</taxon>
        <taxon>Phalaenopsis</taxon>
    </lineage>
</organism>
<comment type="function">
    <text evidence="1">This b-type cytochrome is tightly associated with the reaction center of photosystem II (PSII). PSII is a light-driven water:plastoquinone oxidoreductase that uses light energy to abstract electrons from H(2)O, generating O(2) and a proton gradient subsequently used for ATP formation. It consists of a core antenna complex that captures photons, and an electron transfer chain that converts photonic excitation into a charge separation.</text>
</comment>
<comment type="cofactor">
    <cofactor evidence="1">
        <name>heme b</name>
        <dbReference type="ChEBI" id="CHEBI:60344"/>
    </cofactor>
    <text evidence="1">With its partner (PsbF) binds heme. PSII binds additional chlorophylls, carotenoids and specific lipids.</text>
</comment>
<comment type="subunit">
    <text evidence="1">Heterodimer of an alpha subunit and a beta subunit. PSII is composed of 1 copy each of membrane proteins PsbA, PsbB, PsbC, PsbD, PsbE, PsbF, PsbH, PsbI, PsbJ, PsbK, PsbL, PsbM, PsbT, PsbX, PsbY, PsbZ, Psb30/Ycf12, at least 3 peripheral proteins of the oxygen-evolving complex and a large number of cofactors. It forms dimeric complexes.</text>
</comment>
<comment type="subcellular location">
    <subcellularLocation>
        <location evidence="1">Plastid</location>
        <location evidence="1">Chloroplast thylakoid membrane</location>
        <topology evidence="1">Single-pass membrane protein</topology>
    </subcellularLocation>
</comment>
<comment type="similarity">
    <text evidence="1">Belongs to the PsbE/PsbF family.</text>
</comment>
<geneLocation type="chloroplast"/>
<name>PSBE_PHAAO</name>